<sequence>METATLVAIFISGLLVSFTGYALYTAFGQPSQQLRDPFEEHGD</sequence>
<keyword id="KW-0150">Chloroplast</keyword>
<keyword id="KW-0472">Membrane</keyword>
<keyword id="KW-0934">Plastid</keyword>
<keyword id="KW-0793">Thylakoid</keyword>
<keyword id="KW-0812">Transmembrane</keyword>
<keyword id="KW-1133">Transmembrane helix</keyword>
<dbReference type="EMBL" id="AY147541">
    <property type="protein sequence ID" value="AAN32264.1"/>
    <property type="molecule type" value="Genomic_DNA"/>
</dbReference>
<dbReference type="SMR" id="Q67HT8"/>
<dbReference type="GO" id="GO:0009535">
    <property type="term" value="C:chloroplast thylakoid membrane"/>
    <property type="evidence" value="ECO:0007669"/>
    <property type="project" value="UniProtKB-SubCell"/>
</dbReference>
<dbReference type="GO" id="GO:0015979">
    <property type="term" value="P:photosynthesis"/>
    <property type="evidence" value="ECO:0007669"/>
    <property type="project" value="InterPro"/>
</dbReference>
<dbReference type="HAMAP" id="MF_00293">
    <property type="entry name" value="PSII_PsbN"/>
    <property type="match status" value="1"/>
</dbReference>
<dbReference type="InterPro" id="IPR003398">
    <property type="entry name" value="PSII_PsbN"/>
</dbReference>
<dbReference type="PANTHER" id="PTHR35326">
    <property type="entry name" value="PROTEIN PSBN"/>
    <property type="match status" value="1"/>
</dbReference>
<dbReference type="PANTHER" id="PTHR35326:SF3">
    <property type="entry name" value="PROTEIN PSBN"/>
    <property type="match status" value="1"/>
</dbReference>
<dbReference type="Pfam" id="PF02468">
    <property type="entry name" value="PsbN"/>
    <property type="match status" value="1"/>
</dbReference>
<proteinExistence type="inferred from homology"/>
<accession>Q67HT8</accession>
<feature type="chain" id="PRO_0000207920" description="Protein PsbN">
    <location>
        <begin position="1"/>
        <end position="43"/>
    </location>
</feature>
<feature type="transmembrane region" description="Helical" evidence="1">
    <location>
        <begin position="7"/>
        <end position="27"/>
    </location>
</feature>
<organism>
    <name type="scientific">Maianthemum racemosum</name>
    <name type="common">False Solomon's-seal</name>
    <name type="synonym">Smilacina racemosa</name>
    <dbReference type="NCBI Taxonomy" id="39530"/>
    <lineage>
        <taxon>Eukaryota</taxon>
        <taxon>Viridiplantae</taxon>
        <taxon>Streptophyta</taxon>
        <taxon>Embryophyta</taxon>
        <taxon>Tracheophyta</taxon>
        <taxon>Spermatophyta</taxon>
        <taxon>Magnoliopsida</taxon>
        <taxon>Liliopsida</taxon>
        <taxon>Asparagales</taxon>
        <taxon>Asparagaceae</taxon>
        <taxon>Nolinoideae</taxon>
        <taxon>Maianthemum</taxon>
    </lineage>
</organism>
<evidence type="ECO:0000255" key="1">
    <source>
        <dbReference type="HAMAP-Rule" id="MF_00293"/>
    </source>
</evidence>
<gene>
    <name evidence="1" type="primary">psbN</name>
</gene>
<geneLocation type="chloroplast"/>
<name>PSBN_MAIRA</name>
<protein>
    <recommendedName>
        <fullName evidence="1">Protein PsbN</fullName>
    </recommendedName>
</protein>
<comment type="function">
    <text evidence="1">May play a role in photosystem I and II biogenesis.</text>
</comment>
<comment type="subcellular location">
    <subcellularLocation>
        <location evidence="1">Plastid</location>
        <location evidence="1">Chloroplast thylakoid membrane</location>
        <topology evidence="1">Single-pass membrane protein</topology>
    </subcellularLocation>
</comment>
<comment type="similarity">
    <text evidence="1">Belongs to the PsbN family.</text>
</comment>
<comment type="caution">
    <text evidence="1">Originally thought to be a component of PSII; based on experiments in Synechocystis, N.tabacum and barley, and its absence from PSII in T.elongatus and T.vulcanus, this is probably not true.</text>
</comment>
<reference key="1">
    <citation type="submission" date="2002-09" db="EMBL/GenBank/DDBJ databases">
        <title>Phylogenetic relationships among the major lineages of Asparagales based on a large chloroplast data set.</title>
        <authorList>
            <person name="McPherson M.A."/>
            <person name="Rai H.S."/>
            <person name="Wong W.A."/>
            <person name="Graham S.W."/>
        </authorList>
    </citation>
    <scope>NUCLEOTIDE SEQUENCE [GENOMIC DNA]</scope>
</reference>